<evidence type="ECO:0000255" key="1">
    <source>
        <dbReference type="HAMAP-Rule" id="MF_00675"/>
    </source>
</evidence>
<keyword id="KW-0413">Isomerase</keyword>
<name>UXAC_SOLUE</name>
<organism>
    <name type="scientific">Solibacter usitatus (strain Ellin6076)</name>
    <dbReference type="NCBI Taxonomy" id="234267"/>
    <lineage>
        <taxon>Bacteria</taxon>
        <taxon>Pseudomonadati</taxon>
        <taxon>Acidobacteriota</taxon>
        <taxon>Terriglobia</taxon>
        <taxon>Bryobacterales</taxon>
        <taxon>Solibacteraceae</taxon>
        <taxon>Candidatus Solibacter</taxon>
    </lineage>
</organism>
<gene>
    <name evidence="1" type="primary">uxaC</name>
    <name type="ordered locus">Acid_5330</name>
</gene>
<comment type="catalytic activity">
    <reaction evidence="1">
        <text>D-glucuronate = D-fructuronate</text>
        <dbReference type="Rhea" id="RHEA:13049"/>
        <dbReference type="ChEBI" id="CHEBI:58720"/>
        <dbReference type="ChEBI" id="CHEBI:59863"/>
        <dbReference type="EC" id="5.3.1.12"/>
    </reaction>
</comment>
<comment type="catalytic activity">
    <reaction evidence="1">
        <text>aldehydo-D-galacturonate = keto-D-tagaturonate</text>
        <dbReference type="Rhea" id="RHEA:27702"/>
        <dbReference type="ChEBI" id="CHEBI:12952"/>
        <dbReference type="ChEBI" id="CHEBI:17886"/>
        <dbReference type="EC" id="5.3.1.12"/>
    </reaction>
</comment>
<comment type="pathway">
    <text evidence="1">Carbohydrate metabolism; pentose and glucuronate interconversion.</text>
</comment>
<comment type="similarity">
    <text evidence="1">Belongs to the metallo-dependent hydrolases superfamily. Uronate isomerase family.</text>
</comment>
<proteinExistence type="inferred from homology"/>
<dbReference type="EC" id="5.3.1.12" evidence="1"/>
<dbReference type="EMBL" id="CP000473">
    <property type="protein sequence ID" value="ABJ86279.1"/>
    <property type="molecule type" value="Genomic_DNA"/>
</dbReference>
<dbReference type="SMR" id="Q01VN6"/>
<dbReference type="FunCoup" id="Q01VN6">
    <property type="interactions" value="125"/>
</dbReference>
<dbReference type="STRING" id="234267.Acid_5330"/>
<dbReference type="KEGG" id="sus:Acid_5330"/>
<dbReference type="eggNOG" id="COG1904">
    <property type="taxonomic scope" value="Bacteria"/>
</dbReference>
<dbReference type="HOGENOM" id="CLU_044465_1_0_0"/>
<dbReference type="InParanoid" id="Q01VN6"/>
<dbReference type="OrthoDB" id="9766564at2"/>
<dbReference type="UniPathway" id="UPA00246"/>
<dbReference type="GO" id="GO:0008880">
    <property type="term" value="F:glucuronate isomerase activity"/>
    <property type="evidence" value="ECO:0007669"/>
    <property type="project" value="UniProtKB-UniRule"/>
</dbReference>
<dbReference type="GO" id="GO:0019698">
    <property type="term" value="P:D-galacturonate catabolic process"/>
    <property type="evidence" value="ECO:0007669"/>
    <property type="project" value="TreeGrafter"/>
</dbReference>
<dbReference type="GO" id="GO:0042840">
    <property type="term" value="P:D-glucuronate catabolic process"/>
    <property type="evidence" value="ECO:0007669"/>
    <property type="project" value="TreeGrafter"/>
</dbReference>
<dbReference type="Gene3D" id="3.20.20.140">
    <property type="entry name" value="Metal-dependent hydrolases"/>
    <property type="match status" value="1"/>
</dbReference>
<dbReference type="Gene3D" id="1.10.2020.10">
    <property type="entry name" value="uronate isomerase, domain 2, chain A"/>
    <property type="match status" value="1"/>
</dbReference>
<dbReference type="HAMAP" id="MF_00675">
    <property type="entry name" value="UxaC"/>
    <property type="match status" value="1"/>
</dbReference>
<dbReference type="InterPro" id="IPR032466">
    <property type="entry name" value="Metal_Hydrolase"/>
</dbReference>
<dbReference type="InterPro" id="IPR003766">
    <property type="entry name" value="Uronate_isomerase"/>
</dbReference>
<dbReference type="NCBIfam" id="NF002794">
    <property type="entry name" value="PRK02925.1"/>
    <property type="match status" value="1"/>
</dbReference>
<dbReference type="PANTHER" id="PTHR30068">
    <property type="entry name" value="URONATE ISOMERASE"/>
    <property type="match status" value="1"/>
</dbReference>
<dbReference type="PANTHER" id="PTHR30068:SF4">
    <property type="entry name" value="URONATE ISOMERASE"/>
    <property type="match status" value="1"/>
</dbReference>
<dbReference type="Pfam" id="PF02614">
    <property type="entry name" value="UxaC"/>
    <property type="match status" value="1"/>
</dbReference>
<dbReference type="SUPFAM" id="SSF51556">
    <property type="entry name" value="Metallo-dependent hydrolases"/>
    <property type="match status" value="1"/>
</dbReference>
<accession>Q01VN6</accession>
<reference key="1">
    <citation type="journal article" date="2009" name="Appl. Environ. Microbiol.">
        <title>Three genomes from the phylum Acidobacteria provide insight into the lifestyles of these microorganisms in soils.</title>
        <authorList>
            <person name="Ward N.L."/>
            <person name="Challacombe J.F."/>
            <person name="Janssen P.H."/>
            <person name="Henrissat B."/>
            <person name="Coutinho P.M."/>
            <person name="Wu M."/>
            <person name="Xie G."/>
            <person name="Haft D.H."/>
            <person name="Sait M."/>
            <person name="Badger J."/>
            <person name="Barabote R.D."/>
            <person name="Bradley B."/>
            <person name="Brettin T.S."/>
            <person name="Brinkac L.M."/>
            <person name="Bruce D."/>
            <person name="Creasy T."/>
            <person name="Daugherty S.C."/>
            <person name="Davidsen T.M."/>
            <person name="DeBoy R.T."/>
            <person name="Detter J.C."/>
            <person name="Dodson R.J."/>
            <person name="Durkin A.S."/>
            <person name="Ganapathy A."/>
            <person name="Gwinn-Giglio M."/>
            <person name="Han C.S."/>
            <person name="Khouri H."/>
            <person name="Kiss H."/>
            <person name="Kothari S.P."/>
            <person name="Madupu R."/>
            <person name="Nelson K.E."/>
            <person name="Nelson W.C."/>
            <person name="Paulsen I."/>
            <person name="Penn K."/>
            <person name="Ren Q."/>
            <person name="Rosovitz M.J."/>
            <person name="Selengut J.D."/>
            <person name="Shrivastava S."/>
            <person name="Sullivan S.A."/>
            <person name="Tapia R."/>
            <person name="Thompson L.S."/>
            <person name="Watkins K.L."/>
            <person name="Yang Q."/>
            <person name="Yu C."/>
            <person name="Zafar N."/>
            <person name="Zhou L."/>
            <person name="Kuske C.R."/>
        </authorList>
    </citation>
    <scope>NUCLEOTIDE SEQUENCE [LARGE SCALE GENOMIC DNA]</scope>
    <source>
        <strain>Ellin6076</strain>
    </source>
</reference>
<feature type="chain" id="PRO_1000131609" description="Uronate isomerase">
    <location>
        <begin position="1"/>
        <end position="467"/>
    </location>
</feature>
<sequence length="467" mass="53198">MSFIHDDFLLSSKTARRFYHTFAEDQPILDYHCHLPPQDVAANRQFKDLFEIWLEGDHYKWRAMRANGVPESHCTGNAPAYEKFMAWAKTVPATLRNPLYHWTHLELKRYFGIDELLNEQSAARVWEQANAVLATPELTAHRILEKFHVKAVCTTDDPTDDLAAHQAIAASGLATKVFPTFRPDKALHVHAPELFNPWVDRLQVAADTHISTMAEFLDAIKKRHDFFHAMGGRLSDHGINHAFSDFPSEHEAARIFGRARCGHAATSEEHGKFAAYMMLVFGRLDAEKGWTKQLHLGARRNNSTRRFRELGADTGWDSIGDWPQADALGTYLDRLDLENALPKTVIYNLNPADNYVIATMIGNFQDGVTAGKVQFGSGWWFLDQKEAMQWQMNALSNCGMFSKFLGMLTDSRSFMSYPRHEYFRRVLCDLFGRDVENGELPDNDELIGPVIRDICYGNAQRFLGLNV</sequence>
<protein>
    <recommendedName>
        <fullName evidence="1">Uronate isomerase</fullName>
        <ecNumber evidence="1">5.3.1.12</ecNumber>
    </recommendedName>
    <alternativeName>
        <fullName evidence="1">Glucuronate isomerase</fullName>
    </alternativeName>
    <alternativeName>
        <fullName evidence="1">Uronic isomerase</fullName>
    </alternativeName>
</protein>